<accession>Q16822</accession>
<accession>B4DW73</accession>
<accession>O43253</accession>
<accession>Q86U01</accession>
<accession>Q9BV62</accession>
<organism>
    <name type="scientific">Homo sapiens</name>
    <name type="common">Human</name>
    <dbReference type="NCBI Taxonomy" id="9606"/>
    <lineage>
        <taxon>Eukaryota</taxon>
        <taxon>Metazoa</taxon>
        <taxon>Chordata</taxon>
        <taxon>Craniata</taxon>
        <taxon>Vertebrata</taxon>
        <taxon>Euteleostomi</taxon>
        <taxon>Mammalia</taxon>
        <taxon>Eutheria</taxon>
        <taxon>Euarchontoglires</taxon>
        <taxon>Primates</taxon>
        <taxon>Haplorrhini</taxon>
        <taxon>Catarrhini</taxon>
        <taxon>Hominidae</taxon>
        <taxon>Homo</taxon>
    </lineage>
</organism>
<sequence length="640" mass="70699">MAALYRPGLRLNWHGLSPLGWPSCRSIQTLRVLSGDLGQLPTGIRDFVEHSARLCQPEGIHICDGTEAENTATLTLLEQQGLIRKLPKYNNCWLARTDPKDVARVESKTVIVTPSQRDTVPLPPGGARGQLGNWMSPADFQRAVDERFPGCMQGRTMYVLPFSMGPVGSPLSRIGVQLTDSAYVVASMRIMTRLGTPVLQALGDGDFVKCLHSVGQPLTGQGEPVSQWPCNPEKTLIGHVPDQREIISFGSGYGGNSLLGKKCFALRIASRLARDEGWLAEHMLILGITSPAGKKRYVAAAFPSACGKTNLAMMRPALPGWKVECVGDDIAWMRFDSEGRLRAINPENGFFGVAPGTSATTNPNAMATIQSNTIFTNVAETSDGGVYWEGIDQPLPPGVTVTSWLGKPWKPGDKEPCAHPNSRFCAPARQCPIMDPAWEAPEGVPIDAIIFGGRRPKGVPLVYEAFNWRHGVFVGSAMRSESTAAAEHKGKIIMHDPFAMRPFFGYNFGHYLEHWLSMEGRKGAQLPRIFHVNWFRRDEAGHFLWPGFGENARVLDWICRRLEGEDSARETPIGLVPKEGALDLSGLRAIDTTQLFSLPKDFWEQEVRDIRSYLTEQVNQDLPKEVLAELEALERRVHKM</sequence>
<reference key="1">
    <citation type="journal article" date="1996" name="Biochem. J.">
        <title>Molecular cloning, sequencing and expression of the cDNA of the mitochondrial form of phosphoenolpyruvate carboxykinase from human liver.</title>
        <authorList>
            <person name="Modaressi S."/>
            <person name="Christ B."/>
            <person name="Bratke J."/>
            <person name="Zahn S."/>
            <person name="Heise T."/>
            <person name="Jungermann K."/>
        </authorList>
    </citation>
    <scope>NUCLEOTIDE SEQUENCE [MRNA] (ISOFORM 1)</scope>
    <scope>SUBCELLULAR LOCATION</scope>
    <source>
        <tissue>Liver</tissue>
    </source>
</reference>
<reference key="2">
    <citation type="journal article" date="1998" name="Biochem. J.">
        <title>Human mitochondrial phosphoenolpyruvate carboxykinase 2 gene. Structure, chromosomal localization and tissue-specific expression.</title>
        <authorList>
            <person name="Modaressi S."/>
            <person name="Brechtel K."/>
            <person name="Christ B."/>
            <person name="Jungermann K."/>
        </authorList>
    </citation>
    <scope>NUCLEOTIDE SEQUENCE [GENOMIC DNA] (ISOFORM 1)</scope>
    <scope>TISSUE SPECIFICITY</scope>
</reference>
<reference key="3">
    <citation type="submission" date="2003-02" db="EMBL/GenBank/DDBJ databases">
        <title>Full-length cDNA libraries and normalization.</title>
        <authorList>
            <person name="Li W.B."/>
            <person name="Gruber C."/>
            <person name="Jessee J."/>
            <person name="Polayes D."/>
        </authorList>
    </citation>
    <scope>NUCLEOTIDE SEQUENCE [LARGE SCALE MRNA] (ISOFORM 2)</scope>
    <source>
        <tissue>Neuroblastoma</tissue>
    </source>
</reference>
<reference key="4">
    <citation type="journal article" date="2004" name="Nat. Genet.">
        <title>Complete sequencing and characterization of 21,243 full-length human cDNAs.</title>
        <authorList>
            <person name="Ota T."/>
            <person name="Suzuki Y."/>
            <person name="Nishikawa T."/>
            <person name="Otsuki T."/>
            <person name="Sugiyama T."/>
            <person name="Irie R."/>
            <person name="Wakamatsu A."/>
            <person name="Hayashi K."/>
            <person name="Sato H."/>
            <person name="Nagai K."/>
            <person name="Kimura K."/>
            <person name="Makita H."/>
            <person name="Sekine M."/>
            <person name="Obayashi M."/>
            <person name="Nishi T."/>
            <person name="Shibahara T."/>
            <person name="Tanaka T."/>
            <person name="Ishii S."/>
            <person name="Yamamoto J."/>
            <person name="Saito K."/>
            <person name="Kawai Y."/>
            <person name="Isono Y."/>
            <person name="Nakamura Y."/>
            <person name="Nagahari K."/>
            <person name="Murakami K."/>
            <person name="Yasuda T."/>
            <person name="Iwayanagi T."/>
            <person name="Wagatsuma M."/>
            <person name="Shiratori A."/>
            <person name="Sudo H."/>
            <person name="Hosoiri T."/>
            <person name="Kaku Y."/>
            <person name="Kodaira H."/>
            <person name="Kondo H."/>
            <person name="Sugawara M."/>
            <person name="Takahashi M."/>
            <person name="Kanda K."/>
            <person name="Yokoi T."/>
            <person name="Furuya T."/>
            <person name="Kikkawa E."/>
            <person name="Omura Y."/>
            <person name="Abe K."/>
            <person name="Kamihara K."/>
            <person name="Katsuta N."/>
            <person name="Sato K."/>
            <person name="Tanikawa M."/>
            <person name="Yamazaki M."/>
            <person name="Ninomiya K."/>
            <person name="Ishibashi T."/>
            <person name="Yamashita H."/>
            <person name="Murakawa K."/>
            <person name="Fujimori K."/>
            <person name="Tanai H."/>
            <person name="Kimata M."/>
            <person name="Watanabe M."/>
            <person name="Hiraoka S."/>
            <person name="Chiba Y."/>
            <person name="Ishida S."/>
            <person name="Ono Y."/>
            <person name="Takiguchi S."/>
            <person name="Watanabe S."/>
            <person name="Yosida M."/>
            <person name="Hotuta T."/>
            <person name="Kusano J."/>
            <person name="Kanehori K."/>
            <person name="Takahashi-Fujii A."/>
            <person name="Hara H."/>
            <person name="Tanase T.-O."/>
            <person name="Nomura Y."/>
            <person name="Togiya S."/>
            <person name="Komai F."/>
            <person name="Hara R."/>
            <person name="Takeuchi K."/>
            <person name="Arita M."/>
            <person name="Imose N."/>
            <person name="Musashino K."/>
            <person name="Yuuki H."/>
            <person name="Oshima A."/>
            <person name="Sasaki N."/>
            <person name="Aotsuka S."/>
            <person name="Yoshikawa Y."/>
            <person name="Matsunawa H."/>
            <person name="Ichihara T."/>
            <person name="Shiohata N."/>
            <person name="Sano S."/>
            <person name="Moriya S."/>
            <person name="Momiyama H."/>
            <person name="Satoh N."/>
            <person name="Takami S."/>
            <person name="Terashima Y."/>
            <person name="Suzuki O."/>
            <person name="Nakagawa S."/>
            <person name="Senoh A."/>
            <person name="Mizoguchi H."/>
            <person name="Goto Y."/>
            <person name="Shimizu F."/>
            <person name="Wakebe H."/>
            <person name="Hishigaki H."/>
            <person name="Watanabe T."/>
            <person name="Sugiyama A."/>
            <person name="Takemoto M."/>
            <person name="Kawakami B."/>
            <person name="Yamazaki M."/>
            <person name="Watanabe K."/>
            <person name="Kumagai A."/>
            <person name="Itakura S."/>
            <person name="Fukuzumi Y."/>
            <person name="Fujimori Y."/>
            <person name="Komiyama M."/>
            <person name="Tashiro H."/>
            <person name="Tanigami A."/>
            <person name="Fujiwara T."/>
            <person name="Ono T."/>
            <person name="Yamada K."/>
            <person name="Fujii Y."/>
            <person name="Ozaki K."/>
            <person name="Hirao M."/>
            <person name="Ohmori Y."/>
            <person name="Kawabata A."/>
            <person name="Hikiji T."/>
            <person name="Kobatake N."/>
            <person name="Inagaki H."/>
            <person name="Ikema Y."/>
            <person name="Okamoto S."/>
            <person name="Okitani R."/>
            <person name="Kawakami T."/>
            <person name="Noguchi S."/>
            <person name="Itoh T."/>
            <person name="Shigeta K."/>
            <person name="Senba T."/>
            <person name="Matsumura K."/>
            <person name="Nakajima Y."/>
            <person name="Mizuno T."/>
            <person name="Morinaga M."/>
            <person name="Sasaki M."/>
            <person name="Togashi T."/>
            <person name="Oyama M."/>
            <person name="Hata H."/>
            <person name="Watanabe M."/>
            <person name="Komatsu T."/>
            <person name="Mizushima-Sugano J."/>
            <person name="Satoh T."/>
            <person name="Shirai Y."/>
            <person name="Takahashi Y."/>
            <person name="Nakagawa K."/>
            <person name="Okumura K."/>
            <person name="Nagase T."/>
            <person name="Nomura N."/>
            <person name="Kikuchi H."/>
            <person name="Masuho Y."/>
            <person name="Yamashita R."/>
            <person name="Nakai K."/>
            <person name="Yada T."/>
            <person name="Nakamura Y."/>
            <person name="Ohara O."/>
            <person name="Isogai T."/>
            <person name="Sugano S."/>
        </authorList>
    </citation>
    <scope>NUCLEOTIDE SEQUENCE [LARGE SCALE MRNA] (ISOFORM 3)</scope>
    <source>
        <tissue>Kidney</tissue>
    </source>
</reference>
<reference key="5">
    <citation type="journal article" date="2003" name="Nature">
        <title>The DNA sequence and analysis of human chromosome 14.</title>
        <authorList>
            <person name="Heilig R."/>
            <person name="Eckenberg R."/>
            <person name="Petit J.-L."/>
            <person name="Fonknechten N."/>
            <person name="Da Silva C."/>
            <person name="Cattolico L."/>
            <person name="Levy M."/>
            <person name="Barbe V."/>
            <person name="De Berardinis V."/>
            <person name="Ureta-Vidal A."/>
            <person name="Pelletier E."/>
            <person name="Vico V."/>
            <person name="Anthouard V."/>
            <person name="Rowen L."/>
            <person name="Madan A."/>
            <person name="Qin S."/>
            <person name="Sun H."/>
            <person name="Du H."/>
            <person name="Pepin K."/>
            <person name="Artiguenave F."/>
            <person name="Robert C."/>
            <person name="Cruaud C."/>
            <person name="Bruels T."/>
            <person name="Jaillon O."/>
            <person name="Friedlander L."/>
            <person name="Samson G."/>
            <person name="Brottier P."/>
            <person name="Cure S."/>
            <person name="Segurens B."/>
            <person name="Aniere F."/>
            <person name="Samain S."/>
            <person name="Crespeau H."/>
            <person name="Abbasi N."/>
            <person name="Aiach N."/>
            <person name="Boscus D."/>
            <person name="Dickhoff R."/>
            <person name="Dors M."/>
            <person name="Dubois I."/>
            <person name="Friedman C."/>
            <person name="Gouyvenoux M."/>
            <person name="James R."/>
            <person name="Madan A."/>
            <person name="Mairey-Estrada B."/>
            <person name="Mangenot S."/>
            <person name="Martins N."/>
            <person name="Menard M."/>
            <person name="Oztas S."/>
            <person name="Ratcliffe A."/>
            <person name="Shaffer T."/>
            <person name="Trask B."/>
            <person name="Vacherie B."/>
            <person name="Bellemere C."/>
            <person name="Belser C."/>
            <person name="Besnard-Gonnet M."/>
            <person name="Bartol-Mavel D."/>
            <person name="Boutard M."/>
            <person name="Briez-Silla S."/>
            <person name="Combette S."/>
            <person name="Dufosse-Laurent V."/>
            <person name="Ferron C."/>
            <person name="Lechaplais C."/>
            <person name="Louesse C."/>
            <person name="Muselet D."/>
            <person name="Magdelenat G."/>
            <person name="Pateau E."/>
            <person name="Petit E."/>
            <person name="Sirvain-Trukniewicz P."/>
            <person name="Trybou A."/>
            <person name="Vega-Czarny N."/>
            <person name="Bataille E."/>
            <person name="Bluet E."/>
            <person name="Bordelais I."/>
            <person name="Dubois M."/>
            <person name="Dumont C."/>
            <person name="Guerin T."/>
            <person name="Haffray S."/>
            <person name="Hammadi R."/>
            <person name="Muanga J."/>
            <person name="Pellouin V."/>
            <person name="Robert D."/>
            <person name="Wunderle E."/>
            <person name="Gauguet G."/>
            <person name="Roy A."/>
            <person name="Sainte-Marthe L."/>
            <person name="Verdier J."/>
            <person name="Verdier-Discala C."/>
            <person name="Hillier L.W."/>
            <person name="Fulton L."/>
            <person name="McPherson J."/>
            <person name="Matsuda F."/>
            <person name="Wilson R."/>
            <person name="Scarpelli C."/>
            <person name="Gyapay G."/>
            <person name="Wincker P."/>
            <person name="Saurin W."/>
            <person name="Quetier F."/>
            <person name="Waterston R."/>
            <person name="Hood L."/>
            <person name="Weissenbach J."/>
        </authorList>
    </citation>
    <scope>NUCLEOTIDE SEQUENCE [LARGE SCALE GENOMIC DNA]</scope>
</reference>
<reference key="6">
    <citation type="journal article" date="2004" name="Genome Res.">
        <title>The status, quality, and expansion of the NIH full-length cDNA project: the Mammalian Gene Collection (MGC).</title>
        <authorList>
            <consortium name="The MGC Project Team"/>
        </authorList>
    </citation>
    <scope>NUCLEOTIDE SEQUENCE [LARGE SCALE MRNA] (ISOFORM 1)</scope>
    <source>
        <tissue>Placenta</tissue>
    </source>
</reference>
<reference key="7">
    <citation type="journal article" date="2011" name="BMC Syst. Biol.">
        <title>Initial characterization of the human central proteome.</title>
        <authorList>
            <person name="Burkard T.R."/>
            <person name="Planyavsky M."/>
            <person name="Kaupe I."/>
            <person name="Breitwieser F.P."/>
            <person name="Buerckstuemmer T."/>
            <person name="Bennett K.L."/>
            <person name="Superti-Furga G."/>
            <person name="Colinge J."/>
        </authorList>
    </citation>
    <scope>IDENTIFICATION BY MASS SPECTROMETRY [LARGE SCALE ANALYSIS]</scope>
</reference>
<reference key="8">
    <citation type="journal article" date="2014" name="J. Proteomics">
        <title>An enzyme assisted RP-RPLC approach for in-depth analysis of human liver phosphoproteome.</title>
        <authorList>
            <person name="Bian Y."/>
            <person name="Song C."/>
            <person name="Cheng K."/>
            <person name="Dong M."/>
            <person name="Wang F."/>
            <person name="Huang J."/>
            <person name="Sun D."/>
            <person name="Wang L."/>
            <person name="Ye M."/>
            <person name="Zou H."/>
        </authorList>
    </citation>
    <scope>PHOSPHORYLATION [LARGE SCALE ANALYSIS] AT THR-42; SER-115; THR-196 AND SER-304</scope>
    <scope>IDENTIFICATION BY MASS SPECTROMETRY [LARGE SCALE ANALYSIS]</scope>
    <source>
        <tissue>Liver</tissue>
    </source>
</reference>
<reference key="9">
    <citation type="journal article" date="2015" name="Proteomics">
        <title>N-terminome analysis of the human mitochondrial proteome.</title>
        <authorList>
            <person name="Vaca Jacome A.S."/>
            <person name="Rabilloud T."/>
            <person name="Schaeffer-Reiss C."/>
            <person name="Rompais M."/>
            <person name="Ayoub D."/>
            <person name="Lane L."/>
            <person name="Bairoch A."/>
            <person name="Van Dorsselaer A."/>
            <person name="Carapito C."/>
        </authorList>
    </citation>
    <scope>IDENTIFICATION BY MASS SPECTROMETRY [LARGE SCALE ANALYSIS]</scope>
</reference>
<reference key="10">
    <citation type="journal article" date="2016" name="Biochem. Biophys. Rep.">
        <title>Kinetic and functional properties of human mitochondrial phosphoenolpyruvate carboxykinase.</title>
        <authorList>
            <person name="Escos M."/>
            <person name="Latorre P."/>
            <person name="Hidalgo J."/>
            <person name="Hurtado-Guerrero R."/>
            <person name="Carrodeguas J.A."/>
            <person name="Lopez-Buesa P."/>
        </authorList>
    </citation>
    <scope>FUNCTION</scope>
    <scope>CATALYTIC ACTIVITY</scope>
    <scope>COFACTOR</scope>
    <scope>BIOPHYSICOCHEMICAL PROPERTIES</scope>
</reference>
<reference key="11">
    <citation type="journal article" date="2023" name="HGG Adv.">
        <title>Biallelic pathogenic variants in the mitochondrial form of phosphoenolpyruvate carboxykinase cause peripheral neuropathy.</title>
        <authorList>
            <person name="Sondheimer N."/>
            <person name="Aleman A."/>
            <person name="Cameron J."/>
            <person name="Gonorazky H."/>
            <person name="Sabha N."/>
            <person name="Oliveira P."/>
            <person name="Amburgey K."/>
            <person name="Wahedi A."/>
            <person name="Wang D."/>
            <person name="Shy M."/>
            <person name="Dowling J.J."/>
        </authorList>
    </citation>
    <scope>VARIANTS 23-SER--MET-640 DEL; LEU-170 AND 193-ARG--MET-640 DEL</scope>
</reference>
<evidence type="ECO:0000250" key="1">
    <source>
        <dbReference type="UniProtKB" id="P21642"/>
    </source>
</evidence>
<evidence type="ECO:0000250" key="2">
    <source>
        <dbReference type="UniProtKB" id="P35558"/>
    </source>
</evidence>
<evidence type="ECO:0000250" key="3">
    <source>
        <dbReference type="UniProtKB" id="Q8BH04"/>
    </source>
</evidence>
<evidence type="ECO:0000269" key="4">
    <source>
    </source>
</evidence>
<evidence type="ECO:0000269" key="5">
    <source>
    </source>
</evidence>
<evidence type="ECO:0000269" key="6">
    <source>
    </source>
</evidence>
<evidence type="ECO:0000269" key="7">
    <source>
    </source>
</evidence>
<evidence type="ECO:0000303" key="8">
    <source>
    </source>
</evidence>
<evidence type="ECO:0000303" key="9">
    <source ref="3"/>
</evidence>
<evidence type="ECO:0000305" key="10"/>
<evidence type="ECO:0000305" key="11">
    <source>
    </source>
</evidence>
<evidence type="ECO:0000312" key="12">
    <source>
        <dbReference type="HGNC" id="HGNC:8725"/>
    </source>
</evidence>
<evidence type="ECO:0007744" key="13">
    <source>
    </source>
</evidence>
<comment type="function">
    <text evidence="4">Mitochondrial phosphoenolpyruvate carboxykinase that catalyzes the conversion of oxaloacetate (OAA) to phosphoenolpyruvate (PEP), the rate-limiting step in the metabolic pathway that produces glucose from lactate and other precursors derived from the citric acid cycle (PubMed:28955899). Can play an active role in glyceroneogenesis and gluconeogenesis (PubMed:28955899).</text>
</comment>
<comment type="catalytic activity">
    <reaction evidence="4">
        <text>oxaloacetate + GTP = phosphoenolpyruvate + GDP + CO2</text>
        <dbReference type="Rhea" id="RHEA:10388"/>
        <dbReference type="ChEBI" id="CHEBI:16452"/>
        <dbReference type="ChEBI" id="CHEBI:16526"/>
        <dbReference type="ChEBI" id="CHEBI:37565"/>
        <dbReference type="ChEBI" id="CHEBI:58189"/>
        <dbReference type="ChEBI" id="CHEBI:58702"/>
        <dbReference type="EC" id="4.1.1.32"/>
    </reaction>
    <physiologicalReaction direction="left-to-right" evidence="11">
        <dbReference type="Rhea" id="RHEA:10389"/>
    </physiologicalReaction>
</comment>
<comment type="cofactor">
    <cofactor evidence="4">
        <name>Mn(2+)</name>
        <dbReference type="ChEBI" id="CHEBI:29035"/>
    </cofactor>
    <text evidence="1">Binds 1 Mn(2+) ion per subunit.</text>
</comment>
<comment type="biophysicochemical properties">
    <kinetics>
        <KM evidence="4">585 uM for phosphoenolpyruvate</KM>
        <KM evidence="4">8.7 uM for oxaloacetate</KM>
        <KM evidence="4">29 uM for GTP</KM>
        <KM evidence="4">200 uM for Mn(2+)</KM>
        <KM evidence="4">3.5 uM for Mn(2+) (in presence of Mg(2+))</KM>
        <text evidence="4">kcat is 32 sec(-1) with oxaloacetate as substrate. kcat is 585 sec(-1) with phosphoenolpyruvate as substrate.</text>
    </kinetics>
</comment>
<comment type="pathway">
    <text evidence="11">Carbohydrate biosynthesis; gluconeogenesis.</text>
</comment>
<comment type="subunit">
    <text evidence="1">Monomer.</text>
</comment>
<comment type="interaction">
    <interactant intactId="EBI-2825219">
        <id>Q16822</id>
    </interactant>
    <interactant intactId="EBI-347161">
        <id>P84022</id>
        <label>SMAD3</label>
    </interactant>
    <organismsDiffer>false</organismsDiffer>
    <experiments>2</experiments>
</comment>
<comment type="subcellular location">
    <subcellularLocation>
        <location evidence="6">Mitochondrion</location>
    </subcellularLocation>
</comment>
<comment type="alternative products">
    <event type="alternative splicing"/>
    <isoform>
        <id>Q16822-1</id>
        <name>1</name>
        <sequence type="displayed"/>
    </isoform>
    <isoform>
        <id>Q16822-2</id>
        <name>2</name>
        <sequence type="described" ref="VSP_038783"/>
    </isoform>
    <isoform>
        <id>Q16822-3</id>
        <name>3</name>
        <sequence type="described" ref="VSP_059389"/>
    </isoform>
</comment>
<comment type="tissue specificity">
    <text evidence="7">Widely expressed.</text>
</comment>
<comment type="disease">
    <disease id="DI-01986">
        <name>Mitochondrial phosphoenolpyruvate carboxykinase deficiency</name>
        <acronym>M-PEPCKD</acronym>
        <description>Metabolic disorder resulting from impaired gluconeogenesis. It is a rare disease with less than 10 cases reported in the literature. Clinical characteristics include hypotonia, hepatomegaly, failure to thrive, lactic acidosis and hypoglycemia. Autopsy reveals fatty infiltration of both the liver and kidneys. The disorder is transmitted as an autosomal recessive trait.</description>
        <dbReference type="MIM" id="261650"/>
    </disease>
    <text>The gene represented in this entry may be involved in disease pathogenesis.</text>
</comment>
<comment type="miscellaneous">
    <text>In eukaryotes there are two isozymes: a cytoplasmic one and a mitochondrial one.</text>
</comment>
<comment type="similarity">
    <text evidence="10">Belongs to the phosphoenolpyruvate carboxykinase [GTP] family.</text>
</comment>
<comment type="sequence caution" evidence="10">
    <conflict type="erroneous initiation">
        <sequence resource="EMBL-CDS" id="CAD62600"/>
    </conflict>
</comment>
<gene>
    <name evidence="12" type="primary">PCK2</name>
    <name type="synonym">PEPCK2</name>
</gene>
<keyword id="KW-0007">Acetylation</keyword>
<keyword id="KW-0025">Alternative splicing</keyword>
<keyword id="KW-0210">Decarboxylase</keyword>
<keyword id="KW-0225">Disease variant</keyword>
<keyword id="KW-0312">Gluconeogenesis</keyword>
<keyword id="KW-0342">GTP-binding</keyword>
<keyword id="KW-0456">Lyase</keyword>
<keyword id="KW-0464">Manganese</keyword>
<keyword id="KW-0479">Metal-binding</keyword>
<keyword id="KW-0496">Mitochondrion</keyword>
<keyword id="KW-0547">Nucleotide-binding</keyword>
<keyword id="KW-0597">Phosphoprotein</keyword>
<keyword id="KW-1267">Proteomics identification</keyword>
<keyword id="KW-1185">Reference proteome</keyword>
<keyword id="KW-0809">Transit peptide</keyword>
<protein>
    <recommendedName>
        <fullName>Phosphoenolpyruvate carboxykinase [GTP], mitochondrial</fullName>
        <shortName>PEPCK-M</shortName>
        <ecNumber evidence="4">4.1.1.32</ecNumber>
    </recommendedName>
    <alternativeName>
        <fullName evidence="8">Phosphoenolpyruvate carboxykinase 2, mitochondrial</fullName>
        <shortName evidence="8">mtPCK2</shortName>
    </alternativeName>
</protein>
<name>PCKGM_HUMAN</name>
<dbReference type="EC" id="4.1.1.32" evidence="4"/>
<dbReference type="EMBL" id="X92720">
    <property type="protein sequence ID" value="CAA63380.1"/>
    <property type="molecule type" value="mRNA"/>
</dbReference>
<dbReference type="EMBL" id="Y11484">
    <property type="protein sequence ID" value="CAA72272.1"/>
    <property type="molecule type" value="Genomic_DNA"/>
</dbReference>
<dbReference type="EMBL" id="BX248272">
    <property type="protein sequence ID" value="CAD62600.1"/>
    <property type="status" value="ALT_INIT"/>
    <property type="molecule type" value="mRNA"/>
</dbReference>
<dbReference type="EMBL" id="AK301400">
    <property type="protein sequence ID" value="BAG62935.1"/>
    <property type="molecule type" value="mRNA"/>
</dbReference>
<dbReference type="EMBL" id="AK316206">
    <property type="protein sequence ID" value="BAH14577.1"/>
    <property type="molecule type" value="mRNA"/>
</dbReference>
<dbReference type="EMBL" id="AL136295">
    <property type="status" value="NOT_ANNOTATED_CDS"/>
    <property type="molecule type" value="Genomic_DNA"/>
</dbReference>
<dbReference type="EMBL" id="KF455834">
    <property type="status" value="NOT_ANNOTATED_CDS"/>
    <property type="molecule type" value="Genomic_DNA"/>
</dbReference>
<dbReference type="EMBL" id="BC001454">
    <property type="protein sequence ID" value="AAH01454.1"/>
    <property type="molecule type" value="mRNA"/>
</dbReference>
<dbReference type="CCDS" id="CCDS41928.1">
    <molecule id="Q16822-2"/>
</dbReference>
<dbReference type="CCDS" id="CCDS76660.1">
    <molecule id="Q16822-3"/>
</dbReference>
<dbReference type="CCDS" id="CCDS9609.1">
    <molecule id="Q16822-1"/>
</dbReference>
<dbReference type="PIR" id="S69546">
    <property type="entry name" value="S69546"/>
</dbReference>
<dbReference type="RefSeq" id="NP_001018083.2">
    <molecule id="Q16822-2"/>
    <property type="nucleotide sequence ID" value="NM_001018073.3"/>
</dbReference>
<dbReference type="RefSeq" id="NP_001278485.1">
    <molecule id="Q16822-3"/>
    <property type="nucleotide sequence ID" value="NM_001291556.2"/>
</dbReference>
<dbReference type="RefSeq" id="NP_001294983.1">
    <molecule id="Q16822-3"/>
    <property type="nucleotide sequence ID" value="NM_001308054.2"/>
</dbReference>
<dbReference type="RefSeq" id="NP_004554.3">
    <molecule id="Q16822-1"/>
    <property type="nucleotide sequence ID" value="NM_004563.4"/>
</dbReference>
<dbReference type="RefSeq" id="XP_047287384.1">
    <molecule id="Q16822-3"/>
    <property type="nucleotide sequence ID" value="XM_047431428.1"/>
</dbReference>
<dbReference type="RefSeq" id="XP_047287385.1">
    <molecule id="Q16822-3"/>
    <property type="nucleotide sequence ID" value="XM_047431429.1"/>
</dbReference>
<dbReference type="RefSeq" id="XP_054188324.1">
    <molecule id="Q16822-3"/>
    <property type="nucleotide sequence ID" value="XM_054332349.1"/>
</dbReference>
<dbReference type="RefSeq" id="XP_054232136.1">
    <molecule id="Q16822-3"/>
    <property type="nucleotide sequence ID" value="XM_054376161.1"/>
</dbReference>
<dbReference type="RefSeq" id="XP_054232137.1">
    <molecule id="Q16822-3"/>
    <property type="nucleotide sequence ID" value="XM_054376162.1"/>
</dbReference>
<dbReference type="SMR" id="Q16822"/>
<dbReference type="BioGRID" id="111137">
    <property type="interactions" value="109"/>
</dbReference>
<dbReference type="FunCoup" id="Q16822">
    <property type="interactions" value="1260"/>
</dbReference>
<dbReference type="IntAct" id="Q16822">
    <property type="interactions" value="67"/>
</dbReference>
<dbReference type="MINT" id="Q16822"/>
<dbReference type="STRING" id="9606.ENSP00000216780"/>
<dbReference type="ChEMBL" id="CHEMBL3096"/>
<dbReference type="DrugBank" id="DB00787">
    <property type="generic name" value="Acyclovir"/>
</dbReference>
<dbReference type="DrugBank" id="DB06757">
    <property type="generic name" value="Manganese cation"/>
</dbReference>
<dbReference type="GlyGen" id="Q16822">
    <property type="glycosylation" value="1 site, 1 O-linked glycan (1 site)"/>
</dbReference>
<dbReference type="iPTMnet" id="Q16822"/>
<dbReference type="PhosphoSitePlus" id="Q16822"/>
<dbReference type="SwissPalm" id="Q16822"/>
<dbReference type="BioMuta" id="PCK2"/>
<dbReference type="DMDM" id="290457671"/>
<dbReference type="jPOST" id="Q16822"/>
<dbReference type="MassIVE" id="Q16822"/>
<dbReference type="PaxDb" id="9606-ENSP00000216780"/>
<dbReference type="PeptideAtlas" id="Q16822"/>
<dbReference type="ProteomicsDB" id="5315"/>
<dbReference type="ProteomicsDB" id="61082">
    <molecule id="Q16822-1"/>
</dbReference>
<dbReference type="ProteomicsDB" id="61083">
    <molecule id="Q16822-2"/>
</dbReference>
<dbReference type="Pumba" id="Q16822"/>
<dbReference type="TopDownProteomics" id="Q16822-2">
    <molecule id="Q16822-2"/>
</dbReference>
<dbReference type="Antibodypedia" id="8846">
    <property type="antibodies" value="308 antibodies from 35 providers"/>
</dbReference>
<dbReference type="DNASU" id="5106"/>
<dbReference type="Ensembl" id="ENST00000216780.9">
    <molecule id="Q16822-1"/>
    <property type="protein sequence ID" value="ENSP00000216780.4"/>
    <property type="gene ID" value="ENSG00000100889.12"/>
</dbReference>
<dbReference type="Ensembl" id="ENST00000396973.8">
    <molecule id="Q16822-2"/>
    <property type="protein sequence ID" value="ENSP00000380171.4"/>
    <property type="gene ID" value="ENSG00000100889.12"/>
</dbReference>
<dbReference type="Ensembl" id="ENST00000545054.6">
    <molecule id="Q16822-3"/>
    <property type="protein sequence ID" value="ENSP00000441826.2"/>
    <property type="gene ID" value="ENSG00000100889.12"/>
</dbReference>
<dbReference type="Ensembl" id="ENST00000561286.5">
    <molecule id="Q16822-3"/>
    <property type="protein sequence ID" value="ENSP00000454011.1"/>
    <property type="gene ID" value="ENSG00000100889.12"/>
</dbReference>
<dbReference type="Ensembl" id="ENST00000644679.1">
    <molecule id="Q16822-3"/>
    <property type="protein sequence ID" value="ENSP00000496102.1"/>
    <property type="gene ID" value="ENSG00000285241.2"/>
</dbReference>
<dbReference type="Ensembl" id="ENST00000645217.2">
    <molecule id="Q16822-1"/>
    <property type="protein sequence ID" value="ENSP00000494919.1"/>
    <property type="gene ID" value="ENSG00000285241.2"/>
</dbReference>
<dbReference type="Ensembl" id="ENST00000645536.1">
    <molecule id="Q16822-3"/>
    <property type="protein sequence ID" value="ENSP00000496343.1"/>
    <property type="gene ID" value="ENSG00000285241.2"/>
</dbReference>
<dbReference type="Ensembl" id="ENST00000645709.1">
    <molecule id="Q16822-2"/>
    <property type="protein sequence ID" value="ENSP00000494029.1"/>
    <property type="gene ID" value="ENSG00000285241.2"/>
</dbReference>
<dbReference type="GeneID" id="5106"/>
<dbReference type="KEGG" id="hsa:5106"/>
<dbReference type="MANE-Select" id="ENST00000216780.9">
    <property type="protein sequence ID" value="ENSP00000216780.4"/>
    <property type="RefSeq nucleotide sequence ID" value="NM_004563.4"/>
    <property type="RefSeq protein sequence ID" value="NP_004554.3"/>
</dbReference>
<dbReference type="UCSC" id="uc001wlt.4">
    <molecule id="Q16822-1"/>
    <property type="organism name" value="human"/>
</dbReference>
<dbReference type="UCSC" id="uc010tnw.3">
    <property type="organism name" value="human"/>
</dbReference>
<dbReference type="AGR" id="HGNC:8725"/>
<dbReference type="CTD" id="5106"/>
<dbReference type="DisGeNET" id="5106"/>
<dbReference type="GeneCards" id="PCK2"/>
<dbReference type="HGNC" id="HGNC:8725">
    <property type="gene designation" value="PCK2"/>
</dbReference>
<dbReference type="HPA" id="ENSG00000100889">
    <property type="expression patterns" value="Group enriched (intestine, kidney, liver)"/>
</dbReference>
<dbReference type="MalaCards" id="PCK2"/>
<dbReference type="MIM" id="261650">
    <property type="type" value="phenotype"/>
</dbReference>
<dbReference type="MIM" id="614095">
    <property type="type" value="gene"/>
</dbReference>
<dbReference type="neXtProt" id="NX_Q16822"/>
<dbReference type="OpenTargets" id="ENSG00000100889"/>
<dbReference type="Orphanet" id="2880">
    <property type="disease" value="Phosphoenolpyruvate carboxykinase deficiency"/>
</dbReference>
<dbReference type="PharmGKB" id="PA33070"/>
<dbReference type="VEuPathDB" id="HostDB:ENSG00000100889"/>
<dbReference type="eggNOG" id="KOG3749">
    <property type="taxonomic scope" value="Eukaryota"/>
</dbReference>
<dbReference type="GeneTree" id="ENSGT00390000001912"/>
<dbReference type="HOGENOM" id="CLU_028872_1_0_1"/>
<dbReference type="InParanoid" id="Q16822"/>
<dbReference type="OMA" id="SEHMFIT"/>
<dbReference type="OrthoDB" id="5841594at2759"/>
<dbReference type="PAN-GO" id="Q16822">
    <property type="GO annotations" value="12 GO annotations based on evolutionary models"/>
</dbReference>
<dbReference type="PhylomeDB" id="Q16822"/>
<dbReference type="TreeFam" id="TF314402"/>
<dbReference type="BioCyc" id="MetaCyc:HS02160-MONOMER"/>
<dbReference type="BRENDA" id="4.1.1.32">
    <property type="organism ID" value="2681"/>
</dbReference>
<dbReference type="PathwayCommons" id="Q16822"/>
<dbReference type="Reactome" id="R-HSA-70263">
    <property type="pathway name" value="Gluconeogenesis"/>
</dbReference>
<dbReference type="SignaLink" id="Q16822"/>
<dbReference type="SIGNOR" id="Q16822"/>
<dbReference type="UniPathway" id="UPA00138"/>
<dbReference type="BioGRID-ORCS" id="5106">
    <property type="hits" value="21 hits in 1157 CRISPR screens"/>
</dbReference>
<dbReference type="ChiTaRS" id="PCK2">
    <property type="organism name" value="human"/>
</dbReference>
<dbReference type="GenomeRNAi" id="5106"/>
<dbReference type="Pharos" id="Q16822">
    <property type="development level" value="Tbio"/>
</dbReference>
<dbReference type="PRO" id="PR:Q16822"/>
<dbReference type="Proteomes" id="UP000005640">
    <property type="component" value="Chromosome 14"/>
</dbReference>
<dbReference type="RNAct" id="Q16822">
    <property type="molecule type" value="protein"/>
</dbReference>
<dbReference type="Bgee" id="ENSG00000100889">
    <property type="expression patterns" value="Expressed in right lobe of liver and 105 other cell types or tissues"/>
</dbReference>
<dbReference type="ExpressionAtlas" id="Q16822">
    <property type="expression patterns" value="baseline and differential"/>
</dbReference>
<dbReference type="GO" id="GO:0005759">
    <property type="term" value="C:mitochondrial matrix"/>
    <property type="evidence" value="ECO:0000318"/>
    <property type="project" value="GO_Central"/>
</dbReference>
<dbReference type="GO" id="GO:0005739">
    <property type="term" value="C:mitochondrion"/>
    <property type="evidence" value="ECO:0000314"/>
    <property type="project" value="HPA"/>
</dbReference>
<dbReference type="GO" id="GO:0005525">
    <property type="term" value="F:GTP binding"/>
    <property type="evidence" value="ECO:0007669"/>
    <property type="project" value="UniProtKB-KW"/>
</dbReference>
<dbReference type="GO" id="GO:0030145">
    <property type="term" value="F:manganese ion binding"/>
    <property type="evidence" value="ECO:0000314"/>
    <property type="project" value="UniProtKB"/>
</dbReference>
<dbReference type="GO" id="GO:0004613">
    <property type="term" value="F:phosphoenolpyruvate carboxykinase (GTP) activity"/>
    <property type="evidence" value="ECO:0000314"/>
    <property type="project" value="UniProtKB"/>
</dbReference>
<dbReference type="GO" id="GO:0004611">
    <property type="term" value="F:phosphoenolpyruvate carboxykinase activity"/>
    <property type="evidence" value="ECO:0000304"/>
    <property type="project" value="ProtInc"/>
</dbReference>
<dbReference type="GO" id="GO:0071549">
    <property type="term" value="P:cellular response to dexamethasone stimulus"/>
    <property type="evidence" value="ECO:0000318"/>
    <property type="project" value="GO_Central"/>
</dbReference>
<dbReference type="GO" id="GO:0071333">
    <property type="term" value="P:cellular response to glucose stimulus"/>
    <property type="evidence" value="ECO:0000318"/>
    <property type="project" value="GO_Central"/>
</dbReference>
<dbReference type="GO" id="GO:0032869">
    <property type="term" value="P:cellular response to insulin stimulus"/>
    <property type="evidence" value="ECO:0000318"/>
    <property type="project" value="GO_Central"/>
</dbReference>
<dbReference type="GO" id="GO:0071356">
    <property type="term" value="P:cellular response to tumor necrosis factor"/>
    <property type="evidence" value="ECO:0007669"/>
    <property type="project" value="Ensembl"/>
</dbReference>
<dbReference type="GO" id="GO:0006094">
    <property type="term" value="P:gluconeogenesis"/>
    <property type="evidence" value="ECO:0000318"/>
    <property type="project" value="GO_Central"/>
</dbReference>
<dbReference type="GO" id="GO:0046327">
    <property type="term" value="P:glycerol biosynthetic process from pyruvate"/>
    <property type="evidence" value="ECO:0000318"/>
    <property type="project" value="GO_Central"/>
</dbReference>
<dbReference type="GO" id="GO:0070365">
    <property type="term" value="P:hepatocyte differentiation"/>
    <property type="evidence" value="ECO:0000318"/>
    <property type="project" value="GO_Central"/>
</dbReference>
<dbReference type="GO" id="GO:0006107">
    <property type="term" value="P:oxaloacetate metabolic process"/>
    <property type="evidence" value="ECO:0000318"/>
    <property type="project" value="GO_Central"/>
</dbReference>
<dbReference type="GO" id="GO:0032024">
    <property type="term" value="P:positive regulation of insulin secretion"/>
    <property type="evidence" value="ECO:0007669"/>
    <property type="project" value="Ensembl"/>
</dbReference>
<dbReference type="GO" id="GO:0019543">
    <property type="term" value="P:propionate catabolic process"/>
    <property type="evidence" value="ECO:0000318"/>
    <property type="project" value="GO_Central"/>
</dbReference>
<dbReference type="GO" id="GO:0032496">
    <property type="term" value="P:response to lipopolysaccharide"/>
    <property type="evidence" value="ECO:0007669"/>
    <property type="project" value="Ensembl"/>
</dbReference>
<dbReference type="GO" id="GO:0042594">
    <property type="term" value="P:response to starvation"/>
    <property type="evidence" value="ECO:0000318"/>
    <property type="project" value="GO_Central"/>
</dbReference>
<dbReference type="CDD" id="cd00819">
    <property type="entry name" value="PEPCK_GTP"/>
    <property type="match status" value="1"/>
</dbReference>
<dbReference type="FunFam" id="3.90.228.20:FF:000005">
    <property type="entry name" value="Phosphoenolpyruvate carboxykinase [GTP], mitochondrial"/>
    <property type="match status" value="1"/>
</dbReference>
<dbReference type="FunFam" id="3.90.228.20:FF:000006">
    <property type="entry name" value="Phosphoenolpyruvate carboxykinase [GTP], mitochondrial"/>
    <property type="match status" value="1"/>
</dbReference>
<dbReference type="FunFam" id="2.170.8.10:FF:000006">
    <property type="entry name" value="Phosphoenolpyruvate carboxykinase, cytosolic [GTP]"/>
    <property type="match status" value="1"/>
</dbReference>
<dbReference type="FunFam" id="3.40.449.10:FF:000003">
    <property type="entry name" value="Phosphoenolpyruvate carboxykinase, cytosolic [GTP]"/>
    <property type="match status" value="1"/>
</dbReference>
<dbReference type="Gene3D" id="3.90.228.20">
    <property type="match status" value="1"/>
</dbReference>
<dbReference type="Gene3D" id="3.40.449.10">
    <property type="entry name" value="Phosphoenolpyruvate Carboxykinase, domain 1"/>
    <property type="match status" value="1"/>
</dbReference>
<dbReference type="Gene3D" id="2.170.8.10">
    <property type="entry name" value="Phosphoenolpyruvate Carboxykinase, domain 2"/>
    <property type="match status" value="1"/>
</dbReference>
<dbReference type="HAMAP" id="MF_00452">
    <property type="entry name" value="PEPCK_GTP"/>
    <property type="match status" value="1"/>
</dbReference>
<dbReference type="InterPro" id="IPR018091">
    <property type="entry name" value="PEP_carboxykin_GTP_CS"/>
</dbReference>
<dbReference type="InterPro" id="IPR013035">
    <property type="entry name" value="PEP_carboxykinase_C"/>
</dbReference>
<dbReference type="InterPro" id="IPR008209">
    <property type="entry name" value="PEP_carboxykinase_GTP"/>
</dbReference>
<dbReference type="InterPro" id="IPR035077">
    <property type="entry name" value="PEP_carboxykinase_GTP_C"/>
</dbReference>
<dbReference type="InterPro" id="IPR035078">
    <property type="entry name" value="PEP_carboxykinase_GTP_N"/>
</dbReference>
<dbReference type="InterPro" id="IPR008210">
    <property type="entry name" value="PEP_carboxykinase_N"/>
</dbReference>
<dbReference type="NCBIfam" id="NF003253">
    <property type="entry name" value="PRK04210.1"/>
    <property type="match status" value="1"/>
</dbReference>
<dbReference type="PANTHER" id="PTHR11561">
    <property type="entry name" value="PHOSPHOENOLPYRUVATE CARBOXYKINASE"/>
    <property type="match status" value="1"/>
</dbReference>
<dbReference type="PANTHER" id="PTHR11561:SF11">
    <property type="entry name" value="PHOSPHOENOLPYRUVATE CARBOXYKINASE [GTP], MITOCHONDRIAL"/>
    <property type="match status" value="1"/>
</dbReference>
<dbReference type="Pfam" id="PF00821">
    <property type="entry name" value="PEPCK_GTP"/>
    <property type="match status" value="1"/>
</dbReference>
<dbReference type="Pfam" id="PF17297">
    <property type="entry name" value="PEPCK_N"/>
    <property type="match status" value="1"/>
</dbReference>
<dbReference type="PIRSF" id="PIRSF001348">
    <property type="entry name" value="PEP_carboxykinase_GTP"/>
    <property type="match status" value="1"/>
</dbReference>
<dbReference type="SUPFAM" id="SSF68923">
    <property type="entry name" value="PEP carboxykinase N-terminal domain"/>
    <property type="match status" value="1"/>
</dbReference>
<dbReference type="SUPFAM" id="SSF53795">
    <property type="entry name" value="PEP carboxykinase-like"/>
    <property type="match status" value="1"/>
</dbReference>
<dbReference type="PROSITE" id="PS00505">
    <property type="entry name" value="PEPCK_GTP"/>
    <property type="match status" value="1"/>
</dbReference>
<proteinExistence type="evidence at protein level"/>
<feature type="transit peptide" description="Mitochondrion" evidence="1">
    <location>
        <begin position="1"/>
        <end position="32"/>
    </location>
</feature>
<feature type="chain" id="PRO_0000023568" description="Phosphoenolpyruvate carboxykinase [GTP], mitochondrial">
    <location>
        <begin position="33"/>
        <end position="640"/>
    </location>
</feature>
<feature type="binding site" evidence="1">
    <location>
        <position position="104"/>
    </location>
    <ligand>
        <name>phosphoenolpyruvate</name>
        <dbReference type="ChEBI" id="CHEBI:58702"/>
    </ligand>
</feature>
<feature type="binding site" evidence="1">
    <location>
        <position position="255"/>
    </location>
    <ligand>
        <name>phosphoenolpyruvate</name>
        <dbReference type="ChEBI" id="CHEBI:58702"/>
    </ligand>
</feature>
<feature type="binding site" evidence="1">
    <location>
        <position position="262"/>
    </location>
    <ligand>
        <name>Mn(2+)</name>
        <dbReference type="ChEBI" id="CHEBI:29035"/>
    </ligand>
</feature>
<feature type="binding site" evidence="1">
    <location>
        <position position="282"/>
    </location>
    <ligand>
        <name>Mn(2+)</name>
        <dbReference type="ChEBI" id="CHEBI:29035"/>
    </ligand>
</feature>
<feature type="binding site" evidence="1">
    <location>
        <position position="305"/>
    </location>
    <ligand>
        <name>GDP</name>
        <dbReference type="ChEBI" id="CHEBI:58189"/>
    </ligand>
</feature>
<feature type="binding site" evidence="1">
    <location>
        <position position="306"/>
    </location>
    <ligand>
        <name>GDP</name>
        <dbReference type="ChEBI" id="CHEBI:58189"/>
    </ligand>
</feature>
<feature type="binding site" evidence="1">
    <location>
        <position position="306"/>
    </location>
    <ligand>
        <name>Mn(2+)</name>
        <dbReference type="ChEBI" id="CHEBI:29035"/>
    </ligand>
</feature>
<feature type="binding site" evidence="1">
    <location>
        <position position="307"/>
    </location>
    <ligand>
        <name>GDP</name>
        <dbReference type="ChEBI" id="CHEBI:58189"/>
    </ligand>
</feature>
<feature type="binding site" evidence="1">
    <location>
        <position position="308"/>
    </location>
    <ligand>
        <name>GDP</name>
        <dbReference type="ChEBI" id="CHEBI:58189"/>
    </ligand>
</feature>
<feature type="binding site" evidence="1">
    <location>
        <position position="309"/>
    </location>
    <ligand>
        <name>GDP</name>
        <dbReference type="ChEBI" id="CHEBI:58189"/>
    </ligand>
</feature>
<feature type="binding site" evidence="1">
    <location>
        <position position="310"/>
    </location>
    <ligand>
        <name>GDP</name>
        <dbReference type="ChEBI" id="CHEBI:58189"/>
    </ligand>
</feature>
<feature type="binding site" evidence="1">
    <location>
        <position position="329"/>
    </location>
    <ligand>
        <name>Mn(2+)</name>
        <dbReference type="ChEBI" id="CHEBI:29035"/>
    </ligand>
</feature>
<feature type="binding site" evidence="1">
    <location>
        <position position="355"/>
    </location>
    <ligand>
        <name>GDP</name>
        <dbReference type="ChEBI" id="CHEBI:58189"/>
    </ligand>
</feature>
<feature type="binding site" evidence="1">
    <location>
        <position position="421"/>
    </location>
    <ligand>
        <name>phosphoenolpyruvate</name>
        <dbReference type="ChEBI" id="CHEBI:58702"/>
    </ligand>
</feature>
<feature type="binding site" evidence="1">
    <location>
        <position position="423"/>
    </location>
    <ligand>
        <name>phosphoenolpyruvate</name>
        <dbReference type="ChEBI" id="CHEBI:58702"/>
    </ligand>
</feature>
<feature type="binding site" evidence="1">
    <location>
        <position position="454"/>
    </location>
    <ligand>
        <name>GDP</name>
        <dbReference type="ChEBI" id="CHEBI:58189"/>
    </ligand>
</feature>
<feature type="binding site" evidence="1">
    <location>
        <position position="534"/>
    </location>
    <ligand>
        <name>GDP</name>
        <dbReference type="ChEBI" id="CHEBI:58189"/>
    </ligand>
</feature>
<feature type="binding site" evidence="1">
    <location>
        <position position="543"/>
    </location>
    <ligand>
        <name>GDP</name>
        <dbReference type="ChEBI" id="CHEBI:58189"/>
    </ligand>
</feature>
<feature type="binding site" evidence="1">
    <location>
        <position position="548"/>
    </location>
    <ligand>
        <name>GDP</name>
        <dbReference type="ChEBI" id="CHEBI:58189"/>
    </ligand>
</feature>
<feature type="binding site" evidence="1">
    <location>
        <position position="551"/>
    </location>
    <ligand>
        <name>GDP</name>
        <dbReference type="ChEBI" id="CHEBI:58189"/>
    </ligand>
</feature>
<feature type="modified residue" description="Phosphothreonine" evidence="13">
    <location>
        <position position="42"/>
    </location>
</feature>
<feature type="modified residue" description="N6-acetyllysine" evidence="2">
    <location>
        <position position="88"/>
    </location>
</feature>
<feature type="modified residue" description="Phosphoserine" evidence="13">
    <location>
        <position position="115"/>
    </location>
</feature>
<feature type="modified residue" description="Phosphothreonine" evidence="13">
    <location>
        <position position="196"/>
    </location>
</feature>
<feature type="modified residue" description="Phosphoserine" evidence="13">
    <location>
        <position position="304"/>
    </location>
</feature>
<feature type="modified residue" description="N6-succinyllysine" evidence="3">
    <location>
        <position position="457"/>
    </location>
</feature>
<feature type="splice variant" id="VSP_059389" description="In isoform 3.">
    <location>
        <begin position="1"/>
        <end position="134"/>
    </location>
</feature>
<feature type="splice variant" id="VSP_038783" description="In isoform 2." evidence="9">
    <original>DKEPCAHPNSRFCAPARQCPIMDPAWEAPEGVPIDAIIFGGRRPKGVPLVYEAFNWRHGVFVGSAMRSESTAAAEHKGKIIMHDPFAMRPFFGYNFGHYLEHWLSMEGRKGAQLPRIFHVNWFRRDEAGHFLWPGFGENARVLDWICRRLEGEDSARETPIGLVPKEGALDLSGLRAIDTTQLFSLPKDFWEQEVRDIRSYLTEQVNQDLPKEVLAELEALERRVHKM</original>
    <variation>MCGGEGVAQPPGLSTLMVEKLSPQPPTIF</variation>
    <location>
        <begin position="413"/>
        <end position="640"/>
    </location>
</feature>
<feature type="sequence variant" id="VAR_088520" description="Found in a patient with abnormal gait and demyelinating peripheral neuropathy; uncertain significance." evidence="5">
    <location>
        <begin position="23"/>
        <end position="640"/>
    </location>
</feature>
<feature type="sequence variant" id="VAR_042445" description="In dbSNP:rs2229660.">
    <original>R</original>
    <variation>Q</variation>
    <location>
        <position position="31"/>
    </location>
</feature>
<feature type="sequence variant" id="VAR_042446" description="In dbSNP:rs10132601.">
    <original>D</original>
    <variation>N</variation>
    <location>
        <position position="64"/>
    </location>
</feature>
<feature type="sequence variant" id="VAR_088521" description="Found in a patient with abnormal gait and demyelinating peripheral neuropathy; uncertain significance." evidence="5">
    <original>P</original>
    <variation>L</variation>
    <location>
        <position position="170"/>
    </location>
</feature>
<feature type="sequence variant" id="VAR_088522" description="Found in a patient with abnormal gait and demyelinating peripheral neuropathy; likely pathogenic." evidence="5">
    <location>
        <begin position="193"/>
        <end position="640"/>
    </location>
</feature>
<feature type="sequence variant" id="VAR_042447" description="In dbSNP:rs17101262.">
    <original>G</original>
    <variation>S</variation>
    <location>
        <position position="406"/>
    </location>
</feature>
<feature type="sequence variant" id="VAR_056662" description="In dbSNP:rs35618680.">
    <original>R</original>
    <variation>H</variation>
    <location>
        <position position="521"/>
    </location>
</feature>
<feature type="sequence conflict" description="In Ref. 3; CAD62600." evidence="10" ref="3">
    <original>P</original>
    <variation>Q</variation>
    <location>
        <position position="121"/>
    </location>
</feature>
<feature type="sequence conflict" description="In Ref. 1; CAA63380." evidence="10" ref="1">
    <original>R</original>
    <variation>C</variation>
    <location>
        <position position="128"/>
    </location>
</feature>
<feature type="sequence conflict" description="In Ref. 1; CAA63380 and 2; CAA72272." evidence="10" ref="1 2">
    <original>RYV</original>
    <variation>ALC</variation>
    <location>
        <begin position="296"/>
        <end position="298"/>
    </location>
</feature>
<feature type="sequence conflict" description="In Ref. 1; CAA63380 and 2; CAA72272." evidence="10" ref="1 2">
    <original>S</original>
    <variation>R</variation>
    <location>
        <position position="476"/>
    </location>
</feature>